<accession>C7Z193</accession>
<proteinExistence type="inferred from homology"/>
<feature type="chain" id="PRO_0000399345" description="Adenylosuccinate synthetase">
    <location>
        <begin position="1"/>
        <end position="412"/>
    </location>
</feature>
<feature type="active site" description="Proton acceptor" evidence="2">
    <location>
        <position position="13"/>
    </location>
</feature>
<feature type="active site" description="Proton donor" evidence="2">
    <location>
        <position position="41"/>
    </location>
</feature>
<feature type="binding site" evidence="2">
    <location>
        <begin position="12"/>
        <end position="18"/>
    </location>
    <ligand>
        <name>GTP</name>
        <dbReference type="ChEBI" id="CHEBI:37565"/>
    </ligand>
</feature>
<feature type="binding site" description="in other chain" evidence="2">
    <location>
        <begin position="13"/>
        <end position="16"/>
    </location>
    <ligand>
        <name>IMP</name>
        <dbReference type="ChEBI" id="CHEBI:58053"/>
        <note>ligand shared between dimeric partners</note>
    </ligand>
</feature>
<feature type="binding site" evidence="2">
    <location>
        <position position="13"/>
    </location>
    <ligand>
        <name>Mg(2+)</name>
        <dbReference type="ChEBI" id="CHEBI:18420"/>
    </ligand>
</feature>
<feature type="binding site" description="in other chain" evidence="2">
    <location>
        <begin position="38"/>
        <end position="41"/>
    </location>
    <ligand>
        <name>IMP</name>
        <dbReference type="ChEBI" id="CHEBI:58053"/>
        <note>ligand shared between dimeric partners</note>
    </ligand>
</feature>
<feature type="binding site" evidence="2">
    <location>
        <begin position="40"/>
        <end position="42"/>
    </location>
    <ligand>
        <name>GTP</name>
        <dbReference type="ChEBI" id="CHEBI:37565"/>
    </ligand>
</feature>
<feature type="binding site" evidence="2">
    <location>
        <position position="40"/>
    </location>
    <ligand>
        <name>Mg(2+)</name>
        <dbReference type="ChEBI" id="CHEBI:18420"/>
    </ligand>
</feature>
<feature type="binding site" evidence="2">
    <location>
        <position position="134"/>
    </location>
    <ligand>
        <name>IMP</name>
        <dbReference type="ChEBI" id="CHEBI:58053"/>
        <note>ligand shared between dimeric partners</note>
    </ligand>
</feature>
<feature type="binding site" description="in other chain" evidence="2">
    <location>
        <position position="212"/>
    </location>
    <ligand>
        <name>IMP</name>
        <dbReference type="ChEBI" id="CHEBI:58053"/>
        <note>ligand shared between dimeric partners</note>
    </ligand>
</feature>
<feature type="binding site" description="in other chain" evidence="2">
    <location>
        <position position="227"/>
    </location>
    <ligand>
        <name>IMP</name>
        <dbReference type="ChEBI" id="CHEBI:58053"/>
        <note>ligand shared between dimeric partners</note>
    </ligand>
</feature>
<feature type="binding site" evidence="2">
    <location>
        <begin position="287"/>
        <end position="293"/>
    </location>
    <ligand>
        <name>substrate</name>
    </ligand>
</feature>
<feature type="binding site" description="in other chain" evidence="2">
    <location>
        <position position="291"/>
    </location>
    <ligand>
        <name>IMP</name>
        <dbReference type="ChEBI" id="CHEBI:58053"/>
        <note>ligand shared between dimeric partners</note>
    </ligand>
</feature>
<feature type="binding site" evidence="2">
    <location>
        <position position="293"/>
    </location>
    <ligand>
        <name>GTP</name>
        <dbReference type="ChEBI" id="CHEBI:37565"/>
    </ligand>
</feature>
<feature type="binding site" evidence="2">
    <location>
        <begin position="318"/>
        <end position="320"/>
    </location>
    <ligand>
        <name>GTP</name>
        <dbReference type="ChEBI" id="CHEBI:37565"/>
    </ligand>
</feature>
<feature type="binding site" evidence="2">
    <location>
        <begin position="400"/>
        <end position="402"/>
    </location>
    <ligand>
        <name>GTP</name>
        <dbReference type="ChEBI" id="CHEBI:37565"/>
    </ligand>
</feature>
<name>PURA_FUSV7</name>
<protein>
    <recommendedName>
        <fullName evidence="2">Adenylosuccinate synthetase</fullName>
        <shortName evidence="2">AMPSase</shortName>
        <shortName evidence="2">AdSS</shortName>
        <ecNumber evidence="2">6.3.4.4</ecNumber>
    </recommendedName>
    <alternativeName>
        <fullName evidence="2">IMP--aspartate ligase</fullName>
    </alternativeName>
</protein>
<reference key="1">
    <citation type="journal article" date="2009" name="PLoS Genet.">
        <title>The genome of Nectria haematococca: contribution of supernumerary chromosomes to gene expansion.</title>
        <authorList>
            <person name="Coleman J.J."/>
            <person name="Rounsley S.D."/>
            <person name="Rodriguez-Carres M."/>
            <person name="Kuo A."/>
            <person name="Wasmann C.C."/>
            <person name="Grimwood J."/>
            <person name="Schmutz J."/>
            <person name="Taga M."/>
            <person name="White G.J."/>
            <person name="Zhou S."/>
            <person name="Schwartz D.C."/>
            <person name="Freitag M."/>
            <person name="Ma L.-J."/>
            <person name="Danchin E.G.J."/>
            <person name="Henrissat B."/>
            <person name="Coutinho P.M."/>
            <person name="Nelson D.R."/>
            <person name="Straney D."/>
            <person name="Napoli C.A."/>
            <person name="Barker B.M."/>
            <person name="Gribskov M."/>
            <person name="Rep M."/>
            <person name="Kroken S."/>
            <person name="Molnar I."/>
            <person name="Rensing C."/>
            <person name="Kennell J.C."/>
            <person name="Zamora J."/>
            <person name="Farman M.L."/>
            <person name="Selker E.U."/>
            <person name="Salamov A."/>
            <person name="Shapiro H."/>
            <person name="Pangilinan J."/>
            <person name="Lindquist E."/>
            <person name="Lamers C."/>
            <person name="Grigoriev I.V."/>
            <person name="Geiser D.M."/>
            <person name="Covert S.F."/>
            <person name="Temporini E."/>
            <person name="VanEtten H.D."/>
        </authorList>
    </citation>
    <scope>NUCLEOTIDE SEQUENCE [LARGE SCALE GENOMIC DNA]</scope>
    <source>
        <strain>ATCC MYA-4622 / CBS 123669 / FGSC 9596 / NRRL 45880 / 77-13-4</strain>
    </source>
</reference>
<evidence type="ECO:0000250" key="1"/>
<evidence type="ECO:0000255" key="2">
    <source>
        <dbReference type="HAMAP-Rule" id="MF_03125"/>
    </source>
</evidence>
<sequence>MTITVVLGAQWGDEGKGKLVDGQCRDAQLCARAAGGHNAGHEVRVSFHLLPSGLINPKWFYHSMNFIGSGVVFHVPSFFSELQELEDKGLVAVHDRILVSDRVNVLLDMHIAVDGLEERELGGIGPCYQASRARNGIKLTDVFHPELFEQKVRRLADGYQKRFGELFDYDIKAELARFDEYRETLKKYVVDGVSFMRSAQQSDMKIVIEGANALMLDIDYGSYPFVTSSSTTLAGIIGGLTLNPKNITEVVGVVKAYTTRVGSGAFKTEDTEEIGTKLQEIGREWGTSTGRRRRSYTDLVVVKYSNSINYYDSLNLTKLDILDTFETIKIAIAYKVDGEELDSYPADLDILERAEVVYHEMPGWQKPTTNAKTYYDLPKAAREYIEYIEKFVGVKVKYIGTGPDREAMIQRA</sequence>
<dbReference type="EC" id="6.3.4.4" evidence="2"/>
<dbReference type="EMBL" id="GG698905">
    <property type="protein sequence ID" value="EEU42323.1"/>
    <property type="molecule type" value="Genomic_DNA"/>
</dbReference>
<dbReference type="RefSeq" id="XP_003048036.1">
    <property type="nucleotide sequence ID" value="XM_003047990.1"/>
</dbReference>
<dbReference type="SMR" id="C7Z193"/>
<dbReference type="FunCoup" id="C7Z193">
    <property type="interactions" value="857"/>
</dbReference>
<dbReference type="STRING" id="660122.C7Z193"/>
<dbReference type="EnsemblFungi" id="NechaT40313">
    <property type="protein sequence ID" value="NechaP40313"/>
    <property type="gene ID" value="NechaG40313"/>
</dbReference>
<dbReference type="GeneID" id="9671848"/>
<dbReference type="KEGG" id="nhe:NECHADRAFT_40313"/>
<dbReference type="VEuPathDB" id="FungiDB:NECHADRAFT_40313"/>
<dbReference type="eggNOG" id="KOG1355">
    <property type="taxonomic scope" value="Eukaryota"/>
</dbReference>
<dbReference type="HOGENOM" id="CLU_029848_3_2_1"/>
<dbReference type="InParanoid" id="C7Z193"/>
<dbReference type="OMA" id="QSYVRFL"/>
<dbReference type="OrthoDB" id="10265645at2759"/>
<dbReference type="UniPathway" id="UPA00075">
    <property type="reaction ID" value="UER00335"/>
</dbReference>
<dbReference type="Proteomes" id="UP000005206">
    <property type="component" value="Unassembled WGS sequence"/>
</dbReference>
<dbReference type="GO" id="GO:0005737">
    <property type="term" value="C:cytoplasm"/>
    <property type="evidence" value="ECO:0007669"/>
    <property type="project" value="UniProtKB-SubCell"/>
</dbReference>
<dbReference type="GO" id="GO:0004019">
    <property type="term" value="F:adenylosuccinate synthase activity"/>
    <property type="evidence" value="ECO:0007669"/>
    <property type="project" value="UniProtKB-UniRule"/>
</dbReference>
<dbReference type="GO" id="GO:0005525">
    <property type="term" value="F:GTP binding"/>
    <property type="evidence" value="ECO:0007669"/>
    <property type="project" value="UniProtKB-UniRule"/>
</dbReference>
<dbReference type="GO" id="GO:0000287">
    <property type="term" value="F:magnesium ion binding"/>
    <property type="evidence" value="ECO:0007669"/>
    <property type="project" value="UniProtKB-UniRule"/>
</dbReference>
<dbReference type="GO" id="GO:0044208">
    <property type="term" value="P:'de novo' AMP biosynthetic process"/>
    <property type="evidence" value="ECO:0007669"/>
    <property type="project" value="UniProtKB-UniRule"/>
</dbReference>
<dbReference type="GO" id="GO:0046040">
    <property type="term" value="P:IMP metabolic process"/>
    <property type="evidence" value="ECO:0007669"/>
    <property type="project" value="TreeGrafter"/>
</dbReference>
<dbReference type="CDD" id="cd03108">
    <property type="entry name" value="AdSS"/>
    <property type="match status" value="1"/>
</dbReference>
<dbReference type="FunFam" id="3.90.170.10:FF:000001">
    <property type="entry name" value="Adenylosuccinate synthetase"/>
    <property type="match status" value="1"/>
</dbReference>
<dbReference type="Gene3D" id="3.40.440.10">
    <property type="entry name" value="Adenylosuccinate Synthetase, subunit A, domain 1"/>
    <property type="match status" value="1"/>
</dbReference>
<dbReference type="Gene3D" id="1.10.300.10">
    <property type="entry name" value="Adenylosuccinate Synthetase, subunit A, domain 2"/>
    <property type="match status" value="1"/>
</dbReference>
<dbReference type="Gene3D" id="3.90.170.10">
    <property type="entry name" value="Adenylosuccinate Synthetase, subunit A, domain 3"/>
    <property type="match status" value="1"/>
</dbReference>
<dbReference type="HAMAP" id="MF_00011">
    <property type="entry name" value="Adenylosucc_synth"/>
    <property type="match status" value="1"/>
</dbReference>
<dbReference type="InterPro" id="IPR018220">
    <property type="entry name" value="Adenylosuccin_syn_GTP-bd"/>
</dbReference>
<dbReference type="InterPro" id="IPR042109">
    <property type="entry name" value="Adenylosuccinate_synth_dom1"/>
</dbReference>
<dbReference type="InterPro" id="IPR042110">
    <property type="entry name" value="Adenylosuccinate_synth_dom2"/>
</dbReference>
<dbReference type="InterPro" id="IPR042111">
    <property type="entry name" value="Adenylosuccinate_synth_dom3"/>
</dbReference>
<dbReference type="InterPro" id="IPR001114">
    <property type="entry name" value="Adenylosuccinate_synthetase"/>
</dbReference>
<dbReference type="InterPro" id="IPR027417">
    <property type="entry name" value="P-loop_NTPase"/>
</dbReference>
<dbReference type="NCBIfam" id="NF002223">
    <property type="entry name" value="PRK01117.1"/>
    <property type="match status" value="1"/>
</dbReference>
<dbReference type="NCBIfam" id="TIGR00184">
    <property type="entry name" value="purA"/>
    <property type="match status" value="1"/>
</dbReference>
<dbReference type="PANTHER" id="PTHR11846">
    <property type="entry name" value="ADENYLOSUCCINATE SYNTHETASE"/>
    <property type="match status" value="1"/>
</dbReference>
<dbReference type="PANTHER" id="PTHR11846:SF0">
    <property type="entry name" value="ADENYLOSUCCINATE SYNTHETASE"/>
    <property type="match status" value="1"/>
</dbReference>
<dbReference type="Pfam" id="PF00709">
    <property type="entry name" value="Adenylsucc_synt"/>
    <property type="match status" value="1"/>
</dbReference>
<dbReference type="SMART" id="SM00788">
    <property type="entry name" value="Adenylsucc_synt"/>
    <property type="match status" value="1"/>
</dbReference>
<dbReference type="SUPFAM" id="SSF52540">
    <property type="entry name" value="P-loop containing nucleoside triphosphate hydrolases"/>
    <property type="match status" value="1"/>
</dbReference>
<dbReference type="PROSITE" id="PS01266">
    <property type="entry name" value="ADENYLOSUCCIN_SYN_1"/>
    <property type="match status" value="1"/>
</dbReference>
<gene>
    <name type="ORF">NECHADRAFT_40313</name>
</gene>
<organism>
    <name type="scientific">Fusarium vanettenii (strain ATCC MYA-4622 / CBS 123669 / FGSC 9596 / NRRL 45880 / 77-13-4)</name>
    <name type="common">Fusarium solani subsp. pisi</name>
    <dbReference type="NCBI Taxonomy" id="660122"/>
    <lineage>
        <taxon>Eukaryota</taxon>
        <taxon>Fungi</taxon>
        <taxon>Dikarya</taxon>
        <taxon>Ascomycota</taxon>
        <taxon>Pezizomycotina</taxon>
        <taxon>Sordariomycetes</taxon>
        <taxon>Hypocreomycetidae</taxon>
        <taxon>Hypocreales</taxon>
        <taxon>Nectriaceae</taxon>
        <taxon>Fusarium</taxon>
        <taxon>Fusarium solani species complex</taxon>
        <taxon>Fusarium vanettenii</taxon>
    </lineage>
</organism>
<keyword id="KW-0963">Cytoplasm</keyword>
<keyword id="KW-0342">GTP-binding</keyword>
<keyword id="KW-0436">Ligase</keyword>
<keyword id="KW-0460">Magnesium</keyword>
<keyword id="KW-0479">Metal-binding</keyword>
<keyword id="KW-0547">Nucleotide-binding</keyword>
<keyword id="KW-0658">Purine biosynthesis</keyword>
<keyword id="KW-1185">Reference proteome</keyword>
<comment type="function">
    <text evidence="1">Plays an important role in the de novo pathway and in the salvage pathway of purine nucleotide biosynthesis. Catalyzes the first committed step in the biosynthesis of AMP from IMP (By similarity).</text>
</comment>
<comment type="catalytic activity">
    <reaction evidence="2">
        <text>IMP + L-aspartate + GTP = N(6)-(1,2-dicarboxyethyl)-AMP + GDP + phosphate + 2 H(+)</text>
        <dbReference type="Rhea" id="RHEA:15753"/>
        <dbReference type="ChEBI" id="CHEBI:15378"/>
        <dbReference type="ChEBI" id="CHEBI:29991"/>
        <dbReference type="ChEBI" id="CHEBI:37565"/>
        <dbReference type="ChEBI" id="CHEBI:43474"/>
        <dbReference type="ChEBI" id="CHEBI:57567"/>
        <dbReference type="ChEBI" id="CHEBI:58053"/>
        <dbReference type="ChEBI" id="CHEBI:58189"/>
        <dbReference type="EC" id="6.3.4.4"/>
    </reaction>
</comment>
<comment type="cofactor">
    <cofactor evidence="2">
        <name>Mg(2+)</name>
        <dbReference type="ChEBI" id="CHEBI:18420"/>
    </cofactor>
    <text evidence="2">Binds 1 Mg(2+) ion per subunit.</text>
</comment>
<comment type="pathway">
    <text evidence="2">Purine metabolism; AMP biosynthesis via de novo pathway; AMP from IMP: step 1/2.</text>
</comment>
<comment type="subunit">
    <text evidence="2">Homodimer.</text>
</comment>
<comment type="subcellular location">
    <subcellularLocation>
        <location evidence="2">Cytoplasm</location>
    </subcellularLocation>
</comment>
<comment type="similarity">
    <text evidence="2">Belongs to the adenylosuccinate synthetase family.</text>
</comment>